<comment type="function">
    <text evidence="1">Serine protease inhibitor.</text>
</comment>
<comment type="subcellular location">
    <subcellularLocation>
        <location evidence="1">Secreted</location>
    </subcellularLocation>
</comment>
<comment type="tissue specificity">
    <text>Expressed by the venom gland.</text>
</comment>
<comment type="similarity">
    <text evidence="4">Belongs to the venom Kunitz-type family.</text>
</comment>
<organism>
    <name type="scientific">Notechis scutatus scutatus</name>
    <name type="common">Mainland tiger snake</name>
    <name type="synonym">Common tiger snake</name>
    <dbReference type="NCBI Taxonomy" id="70142"/>
    <lineage>
        <taxon>Eukaryota</taxon>
        <taxon>Metazoa</taxon>
        <taxon>Chordata</taxon>
        <taxon>Craniata</taxon>
        <taxon>Vertebrata</taxon>
        <taxon>Euteleostomi</taxon>
        <taxon>Lepidosauria</taxon>
        <taxon>Squamata</taxon>
        <taxon>Bifurcata</taxon>
        <taxon>Unidentata</taxon>
        <taxon>Episquamata</taxon>
        <taxon>Toxicofera</taxon>
        <taxon>Serpentes</taxon>
        <taxon>Colubroidea</taxon>
        <taxon>Elapidae</taxon>
        <taxon>Hydrophiinae</taxon>
        <taxon>Notechis</taxon>
    </lineage>
</organism>
<name>VKT3_NOTSC</name>
<reference key="1">
    <citation type="submission" date="2007-06" db="EMBL/GenBank/DDBJ databases">
        <title>Identification of Kunitz-type serine protease inhibitors from the venom glands of Australian elapid snakes.</title>
        <authorList>
            <person name="St Pierre L."/>
            <person name="Earl S."/>
        </authorList>
    </citation>
    <scope>NUCLEOTIDE SEQUENCE [MRNA]</scope>
    <source>
        <tissue>Venom gland</tissue>
    </source>
</reference>
<accession>B5KL32</accession>
<proteinExistence type="evidence at transcript level"/>
<protein>
    <recommendedName>
        <fullName>Kunitz-type serine protease inhibitor tigerin-3</fullName>
    </recommendedName>
</protein>
<feature type="signal peptide" evidence="2">
    <location>
        <begin position="1"/>
        <end position="24"/>
    </location>
</feature>
<feature type="chain" id="PRO_5000395591" description="Kunitz-type serine protease inhibitor tigerin-3">
    <location>
        <begin position="25"/>
        <end position="83"/>
    </location>
</feature>
<feature type="domain" description="BPTI/Kunitz inhibitor" evidence="3">
    <location>
        <begin position="31"/>
        <end position="81"/>
    </location>
</feature>
<feature type="site" description="Reactive bond for chymotrypsin" evidence="1">
    <location>
        <begin position="41"/>
        <end position="42"/>
    </location>
</feature>
<feature type="disulfide bond" evidence="3">
    <location>
        <begin position="31"/>
        <end position="81"/>
    </location>
</feature>
<feature type="disulfide bond" evidence="3">
    <location>
        <begin position="40"/>
        <end position="64"/>
    </location>
</feature>
<feature type="disulfide bond" evidence="3">
    <location>
        <begin position="56"/>
        <end position="77"/>
    </location>
</feature>
<dbReference type="EMBL" id="EF990740">
    <property type="protein sequence ID" value="ABV64394.1"/>
    <property type="molecule type" value="mRNA"/>
</dbReference>
<dbReference type="SMR" id="B5KL32"/>
<dbReference type="MEROPS" id="I02.052"/>
<dbReference type="GO" id="GO:0005576">
    <property type="term" value="C:extracellular region"/>
    <property type="evidence" value="ECO:0007669"/>
    <property type="project" value="UniProtKB-SubCell"/>
</dbReference>
<dbReference type="GO" id="GO:0004867">
    <property type="term" value="F:serine-type endopeptidase inhibitor activity"/>
    <property type="evidence" value="ECO:0007669"/>
    <property type="project" value="UniProtKB-KW"/>
</dbReference>
<dbReference type="CDD" id="cd22594">
    <property type="entry name" value="Kunitz_textilinin-like"/>
    <property type="match status" value="1"/>
</dbReference>
<dbReference type="FunFam" id="4.10.410.10:FF:000021">
    <property type="entry name" value="Serine protease inhibitor, putative"/>
    <property type="match status" value="1"/>
</dbReference>
<dbReference type="Gene3D" id="4.10.410.10">
    <property type="entry name" value="Pancreatic trypsin inhibitor Kunitz domain"/>
    <property type="match status" value="1"/>
</dbReference>
<dbReference type="InterPro" id="IPR002223">
    <property type="entry name" value="Kunitz_BPTI"/>
</dbReference>
<dbReference type="InterPro" id="IPR036880">
    <property type="entry name" value="Kunitz_BPTI_sf"/>
</dbReference>
<dbReference type="InterPro" id="IPR020901">
    <property type="entry name" value="Prtase_inh_Kunz-CS"/>
</dbReference>
<dbReference type="InterPro" id="IPR050098">
    <property type="entry name" value="TFPI/VKTCI-like"/>
</dbReference>
<dbReference type="PANTHER" id="PTHR10083">
    <property type="entry name" value="KUNITZ-TYPE PROTEASE INHIBITOR-RELATED"/>
    <property type="match status" value="1"/>
</dbReference>
<dbReference type="Pfam" id="PF00014">
    <property type="entry name" value="Kunitz_BPTI"/>
    <property type="match status" value="1"/>
</dbReference>
<dbReference type="PRINTS" id="PR00759">
    <property type="entry name" value="BASICPTASE"/>
</dbReference>
<dbReference type="SMART" id="SM00131">
    <property type="entry name" value="KU"/>
    <property type="match status" value="1"/>
</dbReference>
<dbReference type="SUPFAM" id="SSF57362">
    <property type="entry name" value="BPTI-like"/>
    <property type="match status" value="1"/>
</dbReference>
<dbReference type="PROSITE" id="PS00280">
    <property type="entry name" value="BPTI_KUNITZ_1"/>
    <property type="match status" value="1"/>
</dbReference>
<dbReference type="PROSITE" id="PS50279">
    <property type="entry name" value="BPTI_KUNITZ_2"/>
    <property type="match status" value="1"/>
</dbReference>
<evidence type="ECO:0000250" key="1"/>
<evidence type="ECO:0000255" key="2"/>
<evidence type="ECO:0000255" key="3">
    <source>
        <dbReference type="PROSITE-ProRule" id="PRU00031"/>
    </source>
</evidence>
<evidence type="ECO:0000305" key="4"/>
<keyword id="KW-1015">Disulfide bond</keyword>
<keyword id="KW-0646">Protease inhibitor</keyword>
<keyword id="KW-0964">Secreted</keyword>
<keyword id="KW-0722">Serine protease inhibitor</keyword>
<keyword id="KW-0732">Signal</keyword>
<sequence length="83" mass="9294">MSSGGLLLLLGLLTLWEILTPVSSKDRPHFCHLPHDTGPCNRNTQAFYYNPVYHTCLKFIYGGCQGNSNNFKTIDECKRTCAA</sequence>